<sequence>MSNKMWGGRFSERPDEIMEDINVSIDVDRHLYAQDIAASKAHAAMLAAQGIITASDAKNIGKGLDTILSEITKGAFEFKRALEDIHMNVESRLGELIGPAAGRLHTARSRNDQVATDFRLYVRDTIDDIDAALAAYQHALASRALDHAGTVMPGFTHLQTAQPVTFGHHLLAYVEMAGRDRGRFADARKRLNESPLGAAALAGTSFPIDRHATAEALGFERPMANSLDAVSDRDFVLETLSAASICAVHLSRFAEEIVIWTSPLVGLIKLSDKFTTGSSIMPQKRNPDAAELVRAKTGRVIGALNALLIVMKGLPLAYQKDMQEDKQGAMEAFAALSLAIRAMTGMALDLVPDEARMKAAAGEGYATATDLADWLVRTLKMPFREAHHVTGRIVALASKQGVALHELPLSAMQQVEPKITADVLGVLSVESSVKSRTSFGGTAPKNVASQAKGWLKRLEKQRK</sequence>
<organism>
    <name type="scientific">Bradyrhizobium sp. (strain BTAi1 / ATCC BAA-1182)</name>
    <dbReference type="NCBI Taxonomy" id="288000"/>
    <lineage>
        <taxon>Bacteria</taxon>
        <taxon>Pseudomonadati</taxon>
        <taxon>Pseudomonadota</taxon>
        <taxon>Alphaproteobacteria</taxon>
        <taxon>Hyphomicrobiales</taxon>
        <taxon>Nitrobacteraceae</taxon>
        <taxon>Bradyrhizobium</taxon>
    </lineage>
</organism>
<accession>A5EB50</accession>
<protein>
    <recommendedName>
        <fullName evidence="1">Argininosuccinate lyase</fullName>
        <shortName evidence="1">ASAL</shortName>
        <ecNumber evidence="1">4.3.2.1</ecNumber>
    </recommendedName>
    <alternativeName>
        <fullName evidence="1">Arginosuccinase</fullName>
    </alternativeName>
</protein>
<name>ARLY_BRASB</name>
<evidence type="ECO:0000255" key="1">
    <source>
        <dbReference type="HAMAP-Rule" id="MF_00006"/>
    </source>
</evidence>
<dbReference type="EC" id="4.3.2.1" evidence="1"/>
<dbReference type="EMBL" id="CP000494">
    <property type="protein sequence ID" value="ABQ33394.1"/>
    <property type="molecule type" value="Genomic_DNA"/>
</dbReference>
<dbReference type="RefSeq" id="WP_012041440.1">
    <property type="nucleotide sequence ID" value="NC_009485.1"/>
</dbReference>
<dbReference type="SMR" id="A5EB50"/>
<dbReference type="STRING" id="288000.BBta_1145"/>
<dbReference type="KEGG" id="bbt:BBta_1145"/>
<dbReference type="eggNOG" id="COG0165">
    <property type="taxonomic scope" value="Bacteria"/>
</dbReference>
<dbReference type="HOGENOM" id="CLU_027272_2_3_5"/>
<dbReference type="OrthoDB" id="9769623at2"/>
<dbReference type="UniPathway" id="UPA00068">
    <property type="reaction ID" value="UER00114"/>
</dbReference>
<dbReference type="Proteomes" id="UP000000246">
    <property type="component" value="Chromosome"/>
</dbReference>
<dbReference type="GO" id="GO:0005829">
    <property type="term" value="C:cytosol"/>
    <property type="evidence" value="ECO:0007669"/>
    <property type="project" value="TreeGrafter"/>
</dbReference>
<dbReference type="GO" id="GO:0004056">
    <property type="term" value="F:argininosuccinate lyase activity"/>
    <property type="evidence" value="ECO:0007669"/>
    <property type="project" value="UniProtKB-UniRule"/>
</dbReference>
<dbReference type="GO" id="GO:0042450">
    <property type="term" value="P:arginine biosynthetic process via ornithine"/>
    <property type="evidence" value="ECO:0007669"/>
    <property type="project" value="InterPro"/>
</dbReference>
<dbReference type="GO" id="GO:0006526">
    <property type="term" value="P:L-arginine biosynthetic process"/>
    <property type="evidence" value="ECO:0007669"/>
    <property type="project" value="UniProtKB-UniRule"/>
</dbReference>
<dbReference type="CDD" id="cd01359">
    <property type="entry name" value="Argininosuccinate_lyase"/>
    <property type="match status" value="1"/>
</dbReference>
<dbReference type="FunFam" id="1.10.275.10:FF:000002">
    <property type="entry name" value="Argininosuccinate lyase"/>
    <property type="match status" value="1"/>
</dbReference>
<dbReference type="FunFam" id="1.10.40.30:FF:000001">
    <property type="entry name" value="Argininosuccinate lyase"/>
    <property type="match status" value="1"/>
</dbReference>
<dbReference type="FunFam" id="1.20.200.10:FF:000015">
    <property type="entry name" value="argininosuccinate lyase isoform X2"/>
    <property type="match status" value="1"/>
</dbReference>
<dbReference type="Gene3D" id="1.10.40.30">
    <property type="entry name" value="Fumarase/aspartase (C-terminal domain)"/>
    <property type="match status" value="1"/>
</dbReference>
<dbReference type="Gene3D" id="1.20.200.10">
    <property type="entry name" value="Fumarase/aspartase (Central domain)"/>
    <property type="match status" value="1"/>
</dbReference>
<dbReference type="Gene3D" id="1.10.275.10">
    <property type="entry name" value="Fumarase/aspartase (N-terminal domain)"/>
    <property type="match status" value="1"/>
</dbReference>
<dbReference type="HAMAP" id="MF_00006">
    <property type="entry name" value="Arg_succ_lyase"/>
    <property type="match status" value="1"/>
</dbReference>
<dbReference type="InterPro" id="IPR029419">
    <property type="entry name" value="Arg_succ_lyase_C"/>
</dbReference>
<dbReference type="InterPro" id="IPR009049">
    <property type="entry name" value="Argininosuccinate_lyase"/>
</dbReference>
<dbReference type="InterPro" id="IPR024083">
    <property type="entry name" value="Fumarase/histidase_N"/>
</dbReference>
<dbReference type="InterPro" id="IPR020557">
    <property type="entry name" value="Fumarate_lyase_CS"/>
</dbReference>
<dbReference type="InterPro" id="IPR000362">
    <property type="entry name" value="Fumarate_lyase_fam"/>
</dbReference>
<dbReference type="InterPro" id="IPR022761">
    <property type="entry name" value="Fumarate_lyase_N"/>
</dbReference>
<dbReference type="InterPro" id="IPR008948">
    <property type="entry name" value="L-Aspartase-like"/>
</dbReference>
<dbReference type="NCBIfam" id="TIGR00838">
    <property type="entry name" value="argH"/>
    <property type="match status" value="1"/>
</dbReference>
<dbReference type="PANTHER" id="PTHR43814">
    <property type="entry name" value="ARGININOSUCCINATE LYASE"/>
    <property type="match status" value="1"/>
</dbReference>
<dbReference type="PANTHER" id="PTHR43814:SF1">
    <property type="entry name" value="ARGININOSUCCINATE LYASE"/>
    <property type="match status" value="1"/>
</dbReference>
<dbReference type="Pfam" id="PF14698">
    <property type="entry name" value="ASL_C2"/>
    <property type="match status" value="1"/>
</dbReference>
<dbReference type="Pfam" id="PF00206">
    <property type="entry name" value="Lyase_1"/>
    <property type="match status" value="1"/>
</dbReference>
<dbReference type="PRINTS" id="PR00145">
    <property type="entry name" value="ARGSUCLYASE"/>
</dbReference>
<dbReference type="PRINTS" id="PR00149">
    <property type="entry name" value="FUMRATELYASE"/>
</dbReference>
<dbReference type="SUPFAM" id="SSF48557">
    <property type="entry name" value="L-aspartase-like"/>
    <property type="match status" value="1"/>
</dbReference>
<dbReference type="PROSITE" id="PS00163">
    <property type="entry name" value="FUMARATE_LYASES"/>
    <property type="match status" value="1"/>
</dbReference>
<keyword id="KW-0028">Amino-acid biosynthesis</keyword>
<keyword id="KW-0055">Arginine biosynthesis</keyword>
<keyword id="KW-0963">Cytoplasm</keyword>
<keyword id="KW-0456">Lyase</keyword>
<keyword id="KW-1185">Reference proteome</keyword>
<gene>
    <name evidence="1" type="primary">argH</name>
    <name type="ordered locus">BBta_1145</name>
</gene>
<reference key="1">
    <citation type="journal article" date="2007" name="Science">
        <title>Legumes symbioses: absence of nod genes in photosynthetic bradyrhizobia.</title>
        <authorList>
            <person name="Giraud E."/>
            <person name="Moulin L."/>
            <person name="Vallenet D."/>
            <person name="Barbe V."/>
            <person name="Cytryn E."/>
            <person name="Avarre J.-C."/>
            <person name="Jaubert M."/>
            <person name="Simon D."/>
            <person name="Cartieaux F."/>
            <person name="Prin Y."/>
            <person name="Bena G."/>
            <person name="Hannibal L."/>
            <person name="Fardoux J."/>
            <person name="Kojadinovic M."/>
            <person name="Vuillet L."/>
            <person name="Lajus A."/>
            <person name="Cruveiller S."/>
            <person name="Rouy Z."/>
            <person name="Mangenot S."/>
            <person name="Segurens B."/>
            <person name="Dossat C."/>
            <person name="Franck W.L."/>
            <person name="Chang W.-S."/>
            <person name="Saunders E."/>
            <person name="Bruce D."/>
            <person name="Richardson P."/>
            <person name="Normand P."/>
            <person name="Dreyfus B."/>
            <person name="Pignol D."/>
            <person name="Stacey G."/>
            <person name="Emerich D."/>
            <person name="Vermeglio A."/>
            <person name="Medigue C."/>
            <person name="Sadowsky M."/>
        </authorList>
    </citation>
    <scope>NUCLEOTIDE SEQUENCE [LARGE SCALE GENOMIC DNA]</scope>
    <source>
        <strain>BTAi1 / ATCC BAA-1182</strain>
    </source>
</reference>
<comment type="catalytic activity">
    <reaction evidence="1">
        <text>2-(N(omega)-L-arginino)succinate = fumarate + L-arginine</text>
        <dbReference type="Rhea" id="RHEA:24020"/>
        <dbReference type="ChEBI" id="CHEBI:29806"/>
        <dbReference type="ChEBI" id="CHEBI:32682"/>
        <dbReference type="ChEBI" id="CHEBI:57472"/>
        <dbReference type="EC" id="4.3.2.1"/>
    </reaction>
</comment>
<comment type="pathway">
    <text evidence="1">Amino-acid biosynthesis; L-arginine biosynthesis; L-arginine from L-ornithine and carbamoyl phosphate: step 3/3.</text>
</comment>
<comment type="subcellular location">
    <subcellularLocation>
        <location evidence="1">Cytoplasm</location>
    </subcellularLocation>
</comment>
<comment type="similarity">
    <text evidence="1">Belongs to the lyase 1 family. Argininosuccinate lyase subfamily.</text>
</comment>
<proteinExistence type="inferred from homology"/>
<feature type="chain" id="PRO_1000000453" description="Argininosuccinate lyase">
    <location>
        <begin position="1"/>
        <end position="463"/>
    </location>
</feature>